<dbReference type="EC" id="2.5.1.6" evidence="5"/>
<dbReference type="EMBL" id="X82077">
    <property type="protein sequence ID" value="CAA57581.1"/>
    <property type="molecule type" value="mRNA"/>
</dbReference>
<dbReference type="EMBL" id="L36681">
    <property type="protein sequence ID" value="AAA58773.1"/>
    <property type="molecule type" value="mRNA"/>
</dbReference>
<dbReference type="PIR" id="S66352">
    <property type="entry name" value="S66352"/>
</dbReference>
<dbReference type="SMR" id="P49613"/>
<dbReference type="UniPathway" id="UPA00315">
    <property type="reaction ID" value="UER00080"/>
</dbReference>
<dbReference type="GO" id="GO:0005737">
    <property type="term" value="C:cytoplasm"/>
    <property type="evidence" value="ECO:0007669"/>
    <property type="project" value="UniProtKB-SubCell"/>
</dbReference>
<dbReference type="GO" id="GO:0005524">
    <property type="term" value="F:ATP binding"/>
    <property type="evidence" value="ECO:0007669"/>
    <property type="project" value="UniProtKB-KW"/>
</dbReference>
<dbReference type="GO" id="GO:0046872">
    <property type="term" value="F:metal ion binding"/>
    <property type="evidence" value="ECO:0007669"/>
    <property type="project" value="UniProtKB-KW"/>
</dbReference>
<dbReference type="GO" id="GO:0004478">
    <property type="term" value="F:methionine adenosyltransferase activity"/>
    <property type="evidence" value="ECO:0007669"/>
    <property type="project" value="UniProtKB-EC"/>
</dbReference>
<dbReference type="GO" id="GO:0006730">
    <property type="term" value="P:one-carbon metabolic process"/>
    <property type="evidence" value="ECO:0007669"/>
    <property type="project" value="UniProtKB-KW"/>
</dbReference>
<dbReference type="GO" id="GO:0006556">
    <property type="term" value="P:S-adenosylmethionine biosynthetic process"/>
    <property type="evidence" value="ECO:0007669"/>
    <property type="project" value="UniProtKB-UniPathway"/>
</dbReference>
<dbReference type="CDD" id="cd18079">
    <property type="entry name" value="S-AdoMet_synt"/>
    <property type="match status" value="1"/>
</dbReference>
<dbReference type="FunFam" id="3.30.300.10:FF:000003">
    <property type="entry name" value="S-adenosylmethionine synthase"/>
    <property type="match status" value="1"/>
</dbReference>
<dbReference type="FunFam" id="3.30.300.10:FF:000011">
    <property type="entry name" value="S-adenosylmethionine synthase"/>
    <property type="match status" value="1"/>
</dbReference>
<dbReference type="FunFam" id="3.30.300.10:FF:000021">
    <property type="entry name" value="S-adenosylmethionine synthetase 1"/>
    <property type="match status" value="1"/>
</dbReference>
<dbReference type="Gene3D" id="3.30.300.10">
    <property type="match status" value="3"/>
</dbReference>
<dbReference type="InterPro" id="IPR022631">
    <property type="entry name" value="ADOMET_SYNTHASE_CS"/>
</dbReference>
<dbReference type="InterPro" id="IPR022630">
    <property type="entry name" value="S-AdoMet_synt_C"/>
</dbReference>
<dbReference type="InterPro" id="IPR022629">
    <property type="entry name" value="S-AdoMet_synt_central"/>
</dbReference>
<dbReference type="InterPro" id="IPR022628">
    <property type="entry name" value="S-AdoMet_synt_N"/>
</dbReference>
<dbReference type="InterPro" id="IPR002133">
    <property type="entry name" value="S-AdoMet_synthetase"/>
</dbReference>
<dbReference type="InterPro" id="IPR022636">
    <property type="entry name" value="S-AdoMet_synthetase_sfam"/>
</dbReference>
<dbReference type="NCBIfam" id="TIGR01034">
    <property type="entry name" value="metK"/>
    <property type="match status" value="1"/>
</dbReference>
<dbReference type="PANTHER" id="PTHR11964">
    <property type="entry name" value="S-ADENOSYLMETHIONINE SYNTHETASE"/>
    <property type="match status" value="1"/>
</dbReference>
<dbReference type="Pfam" id="PF02773">
    <property type="entry name" value="S-AdoMet_synt_C"/>
    <property type="match status" value="1"/>
</dbReference>
<dbReference type="Pfam" id="PF02772">
    <property type="entry name" value="S-AdoMet_synt_M"/>
    <property type="match status" value="1"/>
</dbReference>
<dbReference type="Pfam" id="PF00438">
    <property type="entry name" value="S-AdoMet_synt_N"/>
    <property type="match status" value="1"/>
</dbReference>
<dbReference type="PIRSF" id="PIRSF000497">
    <property type="entry name" value="MAT"/>
    <property type="match status" value="1"/>
</dbReference>
<dbReference type="SUPFAM" id="SSF55973">
    <property type="entry name" value="S-adenosylmethionine synthetase"/>
    <property type="match status" value="3"/>
</dbReference>
<dbReference type="PROSITE" id="PS00376">
    <property type="entry name" value="ADOMET_SYNTHASE_1"/>
    <property type="match status" value="1"/>
</dbReference>
<dbReference type="PROSITE" id="PS00377">
    <property type="entry name" value="ADOMET_SYNTHASE_2"/>
    <property type="match status" value="1"/>
</dbReference>
<accession>P49613</accession>
<reference key="1">
    <citation type="journal article" date="1996" name="Plant Mol. Biol.">
        <title>Hormonal regulation of S-adenosylmethionine synthase transcripts in pea ovaries.</title>
        <authorList>
            <person name="Gomez-Gomez L."/>
            <person name="Carrasco P."/>
        </authorList>
    </citation>
    <scope>NUCLEOTIDE SEQUENCE [MRNA]</scope>
    <scope>TISSUE SPECIFICITY</scope>
    <scope>INDUCTION</scope>
    <source>
        <strain>cv. Alaska</strain>
        <tissue>Ovary</tissue>
    </source>
</reference>
<feature type="chain" id="PRO_0000174473" description="S-adenosylmethionine synthase 2">
    <location>
        <begin position="1"/>
        <end position="374"/>
    </location>
</feature>
<feature type="binding site" evidence="3">
    <location>
        <position position="11"/>
    </location>
    <ligand>
        <name>Mg(2+)</name>
        <dbReference type="ChEBI" id="CHEBI:18420"/>
    </ligand>
</feature>
<feature type="binding site" description="in other chain" evidence="4">
    <location>
        <position position="17"/>
    </location>
    <ligand>
        <name>ATP</name>
        <dbReference type="ChEBI" id="CHEBI:30616"/>
        <note>ligand shared between two neighboring subunits</note>
    </ligand>
</feature>
<feature type="binding site" evidence="2">
    <location>
        <position position="45"/>
    </location>
    <ligand>
        <name>K(+)</name>
        <dbReference type="ChEBI" id="CHEBI:29103"/>
    </ligand>
</feature>
<feature type="binding site" description="in other chain" evidence="2">
    <location>
        <position position="58"/>
    </location>
    <ligand>
        <name>L-methionine</name>
        <dbReference type="ChEBI" id="CHEBI:57844"/>
        <note>ligand shared between two neighboring subunits</note>
    </ligand>
</feature>
<feature type="binding site" description="in other chain" evidence="2">
    <location>
        <position position="101"/>
    </location>
    <ligand>
        <name>L-methionine</name>
        <dbReference type="ChEBI" id="CHEBI:57844"/>
        <note>ligand shared between two neighboring subunits</note>
    </ligand>
</feature>
<feature type="binding site" description="in other chain" evidence="4">
    <location>
        <begin position="169"/>
        <end position="171"/>
    </location>
    <ligand>
        <name>ATP</name>
        <dbReference type="ChEBI" id="CHEBI:30616"/>
        <note>ligand shared between two neighboring subunits</note>
    </ligand>
</feature>
<feature type="binding site" description="in other chain" evidence="4">
    <location>
        <begin position="237"/>
        <end position="240"/>
    </location>
    <ligand>
        <name>ATP</name>
        <dbReference type="ChEBI" id="CHEBI:30616"/>
        <note>ligand shared between two neighboring subunits</note>
    </ligand>
</feature>
<feature type="binding site" description="in other chain" evidence="4">
    <location>
        <position position="248"/>
    </location>
    <ligand>
        <name>ATP</name>
        <dbReference type="ChEBI" id="CHEBI:30616"/>
        <note>ligand shared between two neighboring subunits</note>
    </ligand>
</feature>
<feature type="binding site" evidence="2">
    <location>
        <position position="248"/>
    </location>
    <ligand>
        <name>L-methionine</name>
        <dbReference type="ChEBI" id="CHEBI:57844"/>
        <note>ligand shared between two neighboring subunits</note>
    </ligand>
</feature>
<feature type="binding site" description="in other chain" evidence="2">
    <location>
        <begin position="254"/>
        <end position="255"/>
    </location>
    <ligand>
        <name>ATP</name>
        <dbReference type="ChEBI" id="CHEBI:30616"/>
        <note>ligand shared between two neighboring subunits</note>
    </ligand>
</feature>
<feature type="binding site" evidence="2">
    <location>
        <position position="271"/>
    </location>
    <ligand>
        <name>ATP</name>
        <dbReference type="ChEBI" id="CHEBI:30616"/>
        <note>ligand shared between two neighboring subunits</note>
    </ligand>
</feature>
<feature type="binding site" evidence="2">
    <location>
        <position position="275"/>
    </location>
    <ligand>
        <name>ATP</name>
        <dbReference type="ChEBI" id="CHEBI:30616"/>
        <note>ligand shared between two neighboring subunits</note>
    </ligand>
</feature>
<feature type="binding site" evidence="3">
    <location>
        <position position="279"/>
    </location>
    <ligand>
        <name>ATP</name>
        <dbReference type="ChEBI" id="CHEBI:30616"/>
        <note>ligand shared between two neighboring subunits</note>
    </ligand>
</feature>
<feature type="binding site" description="in other chain" evidence="2">
    <location>
        <position position="279"/>
    </location>
    <ligand>
        <name>L-methionine</name>
        <dbReference type="ChEBI" id="CHEBI:57844"/>
        <note>ligand shared between two neighboring subunits</note>
    </ligand>
</feature>
<keyword id="KW-0067">ATP-binding</keyword>
<keyword id="KW-0170">Cobalt</keyword>
<keyword id="KW-0963">Cytoplasm</keyword>
<keyword id="KW-0460">Magnesium</keyword>
<keyword id="KW-0479">Metal-binding</keyword>
<keyword id="KW-0547">Nucleotide-binding</keyword>
<keyword id="KW-0554">One-carbon metabolism</keyword>
<keyword id="KW-0630">Potassium</keyword>
<keyword id="KW-0808">Transferase</keyword>
<proteinExistence type="evidence at transcript level"/>
<name>METK2_PEA</name>
<protein>
    <recommendedName>
        <fullName>S-adenosylmethionine synthase 2</fullName>
        <shortName>AdoMet synthase 2</shortName>
        <ecNumber evidence="5">2.5.1.6</ecNumber>
    </recommendedName>
    <alternativeName>
        <fullName>Methionine adenosyltransferase 2</fullName>
        <shortName>MAT 2</shortName>
    </alternativeName>
</protein>
<evidence type="ECO:0000250" key="1"/>
<evidence type="ECO:0000250" key="2">
    <source>
        <dbReference type="UniProtKB" id="P0A817"/>
    </source>
</evidence>
<evidence type="ECO:0000250" key="3">
    <source>
        <dbReference type="UniProtKB" id="P13444"/>
    </source>
</evidence>
<evidence type="ECO:0000250" key="4">
    <source>
        <dbReference type="UniProtKB" id="Q00266"/>
    </source>
</evidence>
<evidence type="ECO:0000250" key="5">
    <source>
        <dbReference type="UniProtKB" id="Q96551"/>
    </source>
</evidence>
<evidence type="ECO:0000269" key="6">
    <source>
    </source>
</evidence>
<evidence type="ECO:0000305" key="7"/>
<organism>
    <name type="scientific">Pisum sativum</name>
    <name type="common">Garden pea</name>
    <name type="synonym">Lathyrus oleraceus</name>
    <dbReference type="NCBI Taxonomy" id="3888"/>
    <lineage>
        <taxon>Eukaryota</taxon>
        <taxon>Viridiplantae</taxon>
        <taxon>Streptophyta</taxon>
        <taxon>Embryophyta</taxon>
        <taxon>Tracheophyta</taxon>
        <taxon>Spermatophyta</taxon>
        <taxon>Magnoliopsida</taxon>
        <taxon>eudicotyledons</taxon>
        <taxon>Gunneridae</taxon>
        <taxon>Pentapetalae</taxon>
        <taxon>rosids</taxon>
        <taxon>fabids</taxon>
        <taxon>Fabales</taxon>
        <taxon>Fabaceae</taxon>
        <taxon>Papilionoideae</taxon>
        <taxon>50 kb inversion clade</taxon>
        <taxon>NPAAA clade</taxon>
        <taxon>Hologalegina</taxon>
        <taxon>IRL clade</taxon>
        <taxon>Fabeae</taxon>
        <taxon>Pisum</taxon>
    </lineage>
</organism>
<gene>
    <name type="primary">SAMS2</name>
</gene>
<sequence>MATETFLFTSESVNEGHPDKLCDQISDAVLDACLEQDPESKVACETCTKTNMVMVFGEITTKANVDYEKIVRDTCRNIGFVSDDVGLDADNCKVLVNIEQQSPDIAQGVHGHLTKRPEDIGAGDQGHMFGYATDETPEFMPLSHVLATKLGASLTEVRKNGTCPWLRPDGKTQVTVEYYNDKGAMVPIRVHTVLISTQHDETVTNDEIAADLKEHVIKPVIPEKYLDEKTIFHLNPSGRFRHGGPHGDAGLTGRKIIIDTYGGWGAHGGGAFSGKDPTKVDRSGAYIVREAAKSIVANGLARRCLVQVSYAIGVPEPLSVFVDSYGTGKIPDREILNIVKEAFDFRPGMISISLDLLRGGNGRFFEDSCIWTFW</sequence>
<comment type="function">
    <text evidence="5">Catalyzes the formation of S-adenosylmethionine from methionine and ATP. The reaction comprises two steps that are both catalyzed by the same enzyme: formation of S-adenosylmethionine (AdoMet) and triphosphate, and subsequent hydrolysis of the triphosphate.</text>
</comment>
<comment type="catalytic activity">
    <reaction evidence="5">
        <text>L-methionine + ATP + H2O = S-adenosyl-L-methionine + phosphate + diphosphate</text>
        <dbReference type="Rhea" id="RHEA:21080"/>
        <dbReference type="ChEBI" id="CHEBI:15377"/>
        <dbReference type="ChEBI" id="CHEBI:30616"/>
        <dbReference type="ChEBI" id="CHEBI:33019"/>
        <dbReference type="ChEBI" id="CHEBI:43474"/>
        <dbReference type="ChEBI" id="CHEBI:57844"/>
        <dbReference type="ChEBI" id="CHEBI:59789"/>
        <dbReference type="EC" id="2.5.1.6"/>
    </reaction>
</comment>
<comment type="cofactor">
    <cofactor evidence="5">
        <name>Mn(2+)</name>
        <dbReference type="ChEBI" id="CHEBI:29035"/>
    </cofactor>
    <cofactor evidence="5">
        <name>Mg(2+)</name>
        <dbReference type="ChEBI" id="CHEBI:18420"/>
    </cofactor>
    <cofactor evidence="5">
        <name>Co(2+)</name>
        <dbReference type="ChEBI" id="CHEBI:48828"/>
    </cofactor>
    <text evidence="3 5">Binds 2 divalent ions per subunit. The metal ions interact primarily with the substrate (By similarity). Can utilize magnesium, manganese or cobalt (in vitro) (By similarity).</text>
</comment>
<comment type="cofactor">
    <cofactor evidence="5">
        <name>K(+)</name>
        <dbReference type="ChEBI" id="CHEBI:29103"/>
    </cofactor>
    <text evidence="3">Binds 1 potassium ion per subunit. The potassium ion interacts primarily with the substrate (By similarity).</text>
</comment>
<comment type="pathway">
    <text evidence="5">Amino-acid biosynthesis; S-adenosyl-L-methionine biosynthesis; S-adenosyl-L-methionine from L-methionine: step 1/1.</text>
</comment>
<comment type="subunit">
    <text evidence="1">Homotetramer.</text>
</comment>
<comment type="subcellular location">
    <subcellularLocation>
        <location evidence="1">Cytoplasm</location>
    </subcellularLocation>
</comment>
<comment type="tissue specificity">
    <text evidence="6">Expressed in vegetative and reproductive tissues.</text>
</comment>
<comment type="induction">
    <text evidence="6">Up regulated by auxin.</text>
</comment>
<comment type="similarity">
    <text evidence="7">Belongs to the AdoMet synthase family.</text>
</comment>